<sequence length="822" mass="90258">MMLLSSSYSGGQFPGVSPLGTRPKRSTTVVPRPVVTRATAGGVRNNLEVVGNAGTLQGMDIDELRVIVRKQLQGVELSPSSYDTAWVAMVPVQGSRQSPCFPQCVEWILQNQQEDGSWGHSAGPSGEVNKDILLSTLACVLALNIWNVGQDHIRRGLSFIGRNFSVAIDGQCAAPVGFNITFSGMLRLAIGMGLKFPVMETDIDSIFRLREVEFERDAGGTASARKAFMAYVSEGLGREQDWDHVMAYQRKNGSLFNSPSTTAASAIHSCNDRALDYLVSLTSKLGGPVPAIYPDKVYSQLCMVDTLEKMGISSDFACDIRDILDMTYSCWMQDEEEIMLDMATCAKAFRLLRMHGYDVSSEGMARFAERSSFDDSIHAYLNDTKPLLELYKSSQVHFLEEDFILENIGSWSAKLLKQQLSFNKISKSLMPEVEYALKYPFYATVEVLEHKGNIERFNVNGFQRLKSGYCGSGADKEILALAVNKFHYAQSVYQQELRYLESWVAEFRLDELKFARVIPLQSLLSAVVPLFPCELSDARIAWSQNAILTAVVDDLFDGGGSMEEMLNLVALFDKWDDHGEIGFCSSNVEIMFNAVYNTTKRIGAKAALVQKRCVIDHIAEQWQVMVRAMLTEAEWAAGKHIPATMGEYMSVAEPSFALGPIVPVSAYLLGEELPEEAVRSPEYGRLLGLASAVGRLLNDVMTYEKEMGTGKLNSVVLLQPLAAGGAASRGGGGAPAPAPASVEAARAEVRRAIQASWRDLHGLVFGSGGGSSSSIIPRPCREVFWHTGKVASVFYQEGDGYARKAMRSMANAVILEPLHLQE</sequence>
<name>KSL8_ORYSJ</name>
<feature type="chain" id="PRO_0000372322" description="Stemar-13-ene synthase">
    <location>
        <begin position="1"/>
        <end position="822"/>
    </location>
</feature>
<feature type="region of interest" description="Disordered" evidence="2">
    <location>
        <begin position="1"/>
        <end position="29"/>
    </location>
</feature>
<feature type="short sequence motif" description="DDXXD motif">
    <location>
        <begin position="553"/>
        <end position="557"/>
    </location>
</feature>
<feature type="compositionally biased region" description="Polar residues" evidence="2">
    <location>
        <begin position="1"/>
        <end position="10"/>
    </location>
</feature>
<feature type="binding site" evidence="1">
    <location>
        <position position="553"/>
    </location>
    <ligand>
        <name>Mg(2+)</name>
        <dbReference type="ChEBI" id="CHEBI:18420"/>
        <label>1</label>
    </ligand>
</feature>
<feature type="binding site" evidence="1">
    <location>
        <position position="553"/>
    </location>
    <ligand>
        <name>Mg(2+)</name>
        <dbReference type="ChEBI" id="CHEBI:18420"/>
        <label>2</label>
    </ligand>
</feature>
<feature type="binding site" evidence="1">
    <location>
        <position position="557"/>
    </location>
    <ligand>
        <name>Mg(2+)</name>
        <dbReference type="ChEBI" id="CHEBI:18420"/>
        <label>1</label>
    </ligand>
</feature>
<feature type="binding site" evidence="1">
    <location>
        <position position="557"/>
    </location>
    <ligand>
        <name>Mg(2+)</name>
        <dbReference type="ChEBI" id="CHEBI:18420"/>
        <label>2</label>
    </ligand>
</feature>
<feature type="binding site" evidence="1">
    <location>
        <position position="698"/>
    </location>
    <ligand>
        <name>Mg(2+)</name>
        <dbReference type="ChEBI" id="CHEBI:18420"/>
        <label>3</label>
    </ligand>
</feature>
<feature type="binding site" evidence="1">
    <location>
        <position position="702"/>
    </location>
    <ligand>
        <name>Mg(2+)</name>
        <dbReference type="ChEBI" id="CHEBI:18420"/>
        <label>3</label>
    </ligand>
</feature>
<feature type="binding site" evidence="1">
    <location>
        <position position="706"/>
    </location>
    <ligand>
        <name>Mg(2+)</name>
        <dbReference type="ChEBI" id="CHEBI:18420"/>
        <label>3</label>
    </ligand>
</feature>
<feature type="splice variant" id="VSP_037142" description="In isoform 2." evidence="4">
    <location>
        <begin position="39"/>
        <end position="40"/>
    </location>
</feature>
<protein>
    <recommendedName>
        <fullName>Stemar-13-ene synthase</fullName>
        <ecNumber>4.2.3.33</ecNumber>
    </recommendedName>
    <alternativeName>
        <fullName>Diterpene cyclase 2</fullName>
        <shortName>OsDTC2</shortName>
    </alternativeName>
    <alternativeName>
        <fullName>Ent-kaurene synthase-like 8</fullName>
        <shortName>OsKSL8</shortName>
    </alternativeName>
    <alternativeName>
        <fullName>Stemarene synthase</fullName>
    </alternativeName>
</protein>
<dbReference type="EC" id="4.2.3.33"/>
<dbReference type="EMBL" id="AB118056">
    <property type="protein sequence ID" value="BAD34478.1"/>
    <property type="molecule type" value="mRNA"/>
</dbReference>
<dbReference type="EMBL" id="DP000010">
    <property type="protein sequence ID" value="ABA93676.1"/>
    <property type="molecule type" value="Genomic_DNA"/>
</dbReference>
<dbReference type="EMBL" id="AP008217">
    <property type="protein sequence ID" value="BAF28250.1"/>
    <property type="molecule type" value="Genomic_DNA"/>
</dbReference>
<dbReference type="EMBL" id="AP014967">
    <property type="status" value="NOT_ANNOTATED_CDS"/>
    <property type="molecule type" value="Genomic_DNA"/>
</dbReference>
<dbReference type="RefSeq" id="XP_015617512.1">
    <molecule id="Q6BDZ9-1"/>
    <property type="nucleotide sequence ID" value="XM_015762026.1"/>
</dbReference>
<dbReference type="RefSeq" id="XP_015617513.1">
    <molecule id="Q6BDZ9-1"/>
    <property type="nucleotide sequence ID" value="XM_015762027.1"/>
</dbReference>
<dbReference type="RefSeq" id="XP_015617514.1">
    <property type="nucleotide sequence ID" value="XM_015762028.1"/>
</dbReference>
<dbReference type="RefSeq" id="XP_015617515.1">
    <molecule id="Q6BDZ9-1"/>
    <property type="nucleotide sequence ID" value="XM_015762029.1"/>
</dbReference>
<dbReference type="SMR" id="Q6BDZ9"/>
<dbReference type="FunCoup" id="Q6BDZ9">
    <property type="interactions" value="99"/>
</dbReference>
<dbReference type="STRING" id="39947.Q6BDZ9"/>
<dbReference type="PaxDb" id="39947-Q6BDZ9"/>
<dbReference type="KEGG" id="dosa:Os11g0474800"/>
<dbReference type="KEGG" id="osa:136354096"/>
<dbReference type="eggNOG" id="ENOG502QVGX">
    <property type="taxonomic scope" value="Eukaryota"/>
</dbReference>
<dbReference type="HOGENOM" id="CLU_003125_2_3_1"/>
<dbReference type="InParanoid" id="Q6BDZ9"/>
<dbReference type="OrthoDB" id="638746at2759"/>
<dbReference type="BioCyc" id="MetaCyc:DTC2-MONOMER"/>
<dbReference type="BRENDA" id="4.2.3.33">
    <property type="organism ID" value="4460"/>
</dbReference>
<dbReference type="PlantReactome" id="R-OSA-1119521">
    <property type="pathway name" value="Oryzalexin S biosynthesis"/>
</dbReference>
<dbReference type="Proteomes" id="UP000000763">
    <property type="component" value="Chromosome 11"/>
</dbReference>
<dbReference type="Proteomes" id="UP000059680">
    <property type="component" value="Chromosome 11"/>
</dbReference>
<dbReference type="GO" id="GO:0000287">
    <property type="term" value="F:magnesium ion binding"/>
    <property type="evidence" value="ECO:0000318"/>
    <property type="project" value="GO_Central"/>
</dbReference>
<dbReference type="GO" id="GO:0034278">
    <property type="term" value="F:stemar-13-ene synthase activity"/>
    <property type="evidence" value="ECO:0007669"/>
    <property type="project" value="UniProtKB-EC"/>
</dbReference>
<dbReference type="GO" id="GO:0010333">
    <property type="term" value="F:terpene synthase activity"/>
    <property type="evidence" value="ECO:0000318"/>
    <property type="project" value="GO_Central"/>
</dbReference>
<dbReference type="GO" id="GO:0006952">
    <property type="term" value="P:defense response"/>
    <property type="evidence" value="ECO:0007669"/>
    <property type="project" value="UniProtKB-KW"/>
</dbReference>
<dbReference type="GO" id="GO:0016102">
    <property type="term" value="P:diterpenoid biosynthetic process"/>
    <property type="evidence" value="ECO:0000318"/>
    <property type="project" value="GO_Central"/>
</dbReference>
<dbReference type="FunFam" id="1.50.10.160:FF:000002">
    <property type="entry name" value="cis-abienol synthase, chloroplastic"/>
    <property type="match status" value="1"/>
</dbReference>
<dbReference type="FunFam" id="1.50.10.130:FF:000003">
    <property type="entry name" value="Ent-cassa-12,15-diene synthase"/>
    <property type="match status" value="1"/>
</dbReference>
<dbReference type="FunFam" id="1.10.600.10:FF:000005">
    <property type="entry name" value="Ent-kaur-16-ene synthase, chloroplastic"/>
    <property type="match status" value="1"/>
</dbReference>
<dbReference type="Gene3D" id="1.50.10.160">
    <property type="match status" value="1"/>
</dbReference>
<dbReference type="Gene3D" id="1.10.600.10">
    <property type="entry name" value="Farnesyl Diphosphate Synthase"/>
    <property type="match status" value="1"/>
</dbReference>
<dbReference type="Gene3D" id="1.50.10.130">
    <property type="entry name" value="Terpene synthase, N-terminal domain"/>
    <property type="match status" value="1"/>
</dbReference>
<dbReference type="InterPro" id="IPR008949">
    <property type="entry name" value="Isoprenoid_synthase_dom_sf"/>
</dbReference>
<dbReference type="InterPro" id="IPR001906">
    <property type="entry name" value="Terpene_synth_N"/>
</dbReference>
<dbReference type="InterPro" id="IPR036965">
    <property type="entry name" value="Terpene_synth_N_sf"/>
</dbReference>
<dbReference type="InterPro" id="IPR050148">
    <property type="entry name" value="Terpene_synthase-like"/>
</dbReference>
<dbReference type="InterPro" id="IPR005630">
    <property type="entry name" value="Terpene_synthase_metal-bd"/>
</dbReference>
<dbReference type="InterPro" id="IPR008930">
    <property type="entry name" value="Terpenoid_cyclase/PrenylTrfase"/>
</dbReference>
<dbReference type="PANTHER" id="PTHR31739">
    <property type="entry name" value="ENT-COPALYL DIPHOSPHATE SYNTHASE, CHLOROPLASTIC"/>
    <property type="match status" value="1"/>
</dbReference>
<dbReference type="PANTHER" id="PTHR31739:SF17">
    <property type="entry name" value="ENT-SANDARACOPIMARA-8(14),15-DIENE SYNTHASE, CHLOROPLASTIC"/>
    <property type="match status" value="1"/>
</dbReference>
<dbReference type="Pfam" id="PF01397">
    <property type="entry name" value="Terpene_synth"/>
    <property type="match status" value="1"/>
</dbReference>
<dbReference type="Pfam" id="PF03936">
    <property type="entry name" value="Terpene_synth_C"/>
    <property type="match status" value="1"/>
</dbReference>
<dbReference type="SFLD" id="SFLDG01014">
    <property type="entry name" value="Terpene_Cyclase_Like_1_N-term"/>
    <property type="match status" value="1"/>
</dbReference>
<dbReference type="SUPFAM" id="SSF48239">
    <property type="entry name" value="Terpenoid cyclases/Protein prenyltransferases"/>
    <property type="match status" value="2"/>
</dbReference>
<dbReference type="SUPFAM" id="SSF48576">
    <property type="entry name" value="Terpenoid synthases"/>
    <property type="match status" value="1"/>
</dbReference>
<reference key="1">
    <citation type="journal article" date="2004" name="FEBS Lett.">
        <title>Stemar-13-ene synthase, a diterpene cyclase involved in the biosynthesis of the phytoalexin oryzalexin S in rice.</title>
        <authorList>
            <person name="Nemoto T."/>
            <person name="Cho E.-M."/>
            <person name="Okada A."/>
            <person name="Okada K."/>
            <person name="Otomo K."/>
            <person name="Kanno Y."/>
            <person name="Toyomasu T."/>
            <person name="Mitsuhashi W."/>
            <person name="Sassa T."/>
            <person name="Minami E."/>
            <person name="Shibuya N."/>
            <person name="Nishiyama M."/>
            <person name="Nojiri H."/>
            <person name="Yamane H."/>
        </authorList>
    </citation>
    <scope>NUCLEOTIDE SEQUENCE [MRNA] (ISOFORM 2)</scope>
    <scope>FUNCTION</scope>
    <scope>INDUCTION</scope>
</reference>
<reference key="2">
    <citation type="journal article" date="2005" name="BMC Biol.">
        <title>The sequence of rice chromosomes 11 and 12, rich in disease resistance genes and recent gene duplications.</title>
        <authorList>
            <consortium name="The rice chromosomes 11 and 12 sequencing consortia"/>
        </authorList>
    </citation>
    <scope>NUCLEOTIDE SEQUENCE [LARGE SCALE GENOMIC DNA]</scope>
    <source>
        <strain>cv. Nipponbare</strain>
    </source>
</reference>
<reference key="3">
    <citation type="journal article" date="2005" name="Nature">
        <title>The map-based sequence of the rice genome.</title>
        <authorList>
            <consortium name="International rice genome sequencing project (IRGSP)"/>
        </authorList>
    </citation>
    <scope>NUCLEOTIDE SEQUENCE [LARGE SCALE GENOMIC DNA]</scope>
    <source>
        <strain>cv. Nipponbare</strain>
    </source>
</reference>
<reference key="4">
    <citation type="journal article" date="2008" name="Nucleic Acids Res.">
        <title>The rice annotation project database (RAP-DB): 2008 update.</title>
        <authorList>
            <consortium name="The rice annotation project (RAP)"/>
        </authorList>
    </citation>
    <scope>GENOME REANNOTATION</scope>
    <source>
        <strain>cv. Nipponbare</strain>
    </source>
</reference>
<reference key="5">
    <citation type="journal article" date="2013" name="Rice">
        <title>Improvement of the Oryza sativa Nipponbare reference genome using next generation sequence and optical map data.</title>
        <authorList>
            <person name="Kawahara Y."/>
            <person name="de la Bastide M."/>
            <person name="Hamilton J.P."/>
            <person name="Kanamori H."/>
            <person name="McCombie W.R."/>
            <person name="Ouyang S."/>
            <person name="Schwartz D.C."/>
            <person name="Tanaka T."/>
            <person name="Wu J."/>
            <person name="Zhou S."/>
            <person name="Childs K.L."/>
            <person name="Davidson R.M."/>
            <person name="Lin H."/>
            <person name="Quesada-Ocampo L."/>
            <person name="Vaillancourt B."/>
            <person name="Sakai H."/>
            <person name="Lee S.S."/>
            <person name="Kim J."/>
            <person name="Numa H."/>
            <person name="Itoh T."/>
            <person name="Buell C.R."/>
            <person name="Matsumoto T."/>
        </authorList>
    </citation>
    <scope>GENOME REANNOTATION</scope>
    <source>
        <strain>cv. Nipponbare</strain>
    </source>
</reference>
<accession>Q6BDZ9</accession>
<accession>Q2R4G8</accession>
<comment type="function">
    <text evidence="3">Catalyzes the conversion of syn-copalyl diphosphate to the phytoalexin precursor stemarene.</text>
</comment>
<comment type="catalytic activity">
    <reaction>
        <text>9alpha-copalyl diphosphate = stemar-13-ene + diphosphate</text>
        <dbReference type="Rhea" id="RHEA:25552"/>
        <dbReference type="ChEBI" id="CHEBI:33019"/>
        <dbReference type="ChEBI" id="CHEBI:50069"/>
        <dbReference type="ChEBI" id="CHEBI:58622"/>
        <dbReference type="EC" id="4.2.3.33"/>
    </reaction>
</comment>
<comment type="cofactor">
    <cofactor evidence="1">
        <name>Mg(2+)</name>
        <dbReference type="ChEBI" id="CHEBI:18420"/>
    </cofactor>
    <text evidence="1">Binds 3 Mg(2+) ions per subunit.</text>
</comment>
<comment type="alternative products">
    <event type="alternative splicing"/>
    <isoform>
        <id>Q6BDZ9-1</id>
        <name>1</name>
        <sequence type="displayed"/>
    </isoform>
    <isoform>
        <id>Q6BDZ9-2</id>
        <name>2</name>
        <sequence type="described" ref="VSP_037142"/>
    </isoform>
</comment>
<comment type="induction">
    <text evidence="3">By chitin oligosaccharide elicitor and UV irradiation.</text>
</comment>
<comment type="domain">
    <text>The Asp-Asp-Xaa-Xaa-Asp/Glu (DDXXD/E) motif is important for the catalytic activity, presumably through binding to Mg(2+).</text>
</comment>
<comment type="miscellaneous">
    <text>Stemar-13-ene is a putative precursor of the phytoalexin oryzalexin S. Phytoalexins are diterpenoid secondary metabolites involved in the defense mechanism of the plant and produced in response to attack (by a pathogen, elicitor or UV irradiation).</text>
</comment>
<comment type="miscellaneous">
    <molecule>Isoform 2</molecule>
    <text evidence="5">May be due to a competing acceptor splice site.</text>
</comment>
<comment type="similarity">
    <text evidence="5">Belongs to the terpene synthase family.</text>
</comment>
<evidence type="ECO:0000250" key="1"/>
<evidence type="ECO:0000256" key="2">
    <source>
        <dbReference type="SAM" id="MobiDB-lite"/>
    </source>
</evidence>
<evidence type="ECO:0000269" key="3">
    <source>
    </source>
</evidence>
<evidence type="ECO:0000303" key="4">
    <source>
    </source>
</evidence>
<evidence type="ECO:0000305" key="5"/>
<keyword id="KW-0025">Alternative splicing</keyword>
<keyword id="KW-0456">Lyase</keyword>
<keyword id="KW-0460">Magnesium</keyword>
<keyword id="KW-0479">Metal-binding</keyword>
<keyword id="KW-0611">Plant defense</keyword>
<keyword id="KW-1185">Reference proteome</keyword>
<organism>
    <name type="scientific">Oryza sativa subsp. japonica</name>
    <name type="common">Rice</name>
    <dbReference type="NCBI Taxonomy" id="39947"/>
    <lineage>
        <taxon>Eukaryota</taxon>
        <taxon>Viridiplantae</taxon>
        <taxon>Streptophyta</taxon>
        <taxon>Embryophyta</taxon>
        <taxon>Tracheophyta</taxon>
        <taxon>Spermatophyta</taxon>
        <taxon>Magnoliopsida</taxon>
        <taxon>Liliopsida</taxon>
        <taxon>Poales</taxon>
        <taxon>Poaceae</taxon>
        <taxon>BOP clade</taxon>
        <taxon>Oryzoideae</taxon>
        <taxon>Oryzeae</taxon>
        <taxon>Oryzinae</taxon>
        <taxon>Oryza</taxon>
        <taxon>Oryza sativa</taxon>
    </lineage>
</organism>
<gene>
    <name type="primary">KSL8</name>
    <name type="synonym">DTC2</name>
    <name type="ordered locus">Os11g0474800</name>
    <name type="ordered locus">LOC_Os11g28530</name>
</gene>
<proteinExistence type="evidence at transcript level"/>